<keyword id="KW-0450">Lipoyl</keyword>
<feature type="chain" id="PRO_1000022192" description="Glycine cleavage system H protein">
    <location>
        <begin position="1"/>
        <end position="130"/>
    </location>
</feature>
<feature type="domain" description="Lipoyl-binding" evidence="2">
    <location>
        <begin position="22"/>
        <end position="103"/>
    </location>
</feature>
<feature type="modified residue" description="N6-lipoyllysine" evidence="1">
    <location>
        <position position="63"/>
    </location>
</feature>
<gene>
    <name evidence="1" type="primary">gcvH</name>
    <name type="ordered locus">CLB_0736</name>
</gene>
<name>GCSH_CLOB1</name>
<comment type="function">
    <text evidence="1">The glycine cleavage system catalyzes the degradation of glycine. The H protein shuttles the methylamine group of glycine from the P protein to the T protein.</text>
</comment>
<comment type="cofactor">
    <cofactor evidence="1">
        <name>(R)-lipoate</name>
        <dbReference type="ChEBI" id="CHEBI:83088"/>
    </cofactor>
    <text evidence="1">Binds 1 lipoyl cofactor covalently.</text>
</comment>
<comment type="subunit">
    <text evidence="1">The glycine cleavage system is composed of four proteins: P, T, L and H.</text>
</comment>
<comment type="similarity">
    <text evidence="1">Belongs to the GcvH family.</text>
</comment>
<protein>
    <recommendedName>
        <fullName evidence="1">Glycine cleavage system H protein</fullName>
    </recommendedName>
</protein>
<evidence type="ECO:0000255" key="1">
    <source>
        <dbReference type="HAMAP-Rule" id="MF_00272"/>
    </source>
</evidence>
<evidence type="ECO:0000255" key="2">
    <source>
        <dbReference type="PROSITE-ProRule" id="PRU01066"/>
    </source>
</evidence>
<organism>
    <name type="scientific">Clostridium botulinum (strain ATCC 19397 / Type A)</name>
    <dbReference type="NCBI Taxonomy" id="441770"/>
    <lineage>
        <taxon>Bacteria</taxon>
        <taxon>Bacillati</taxon>
        <taxon>Bacillota</taxon>
        <taxon>Clostridia</taxon>
        <taxon>Eubacteriales</taxon>
        <taxon>Clostridiaceae</taxon>
        <taxon>Clostridium</taxon>
    </lineage>
</organism>
<sequence length="130" mass="14605">MKVLNNLLYTGDHEWVRVEDNKAYIGISDCAQRMLSDIVFVELPEVDDEIAKGETFATIESVKAASDSYMPVSGTIVEINEELEDNPAALNEDPYGSWIAAIEMSDKSELEELIKPEVYEKICEELDKEA</sequence>
<dbReference type="EMBL" id="CP000726">
    <property type="protein sequence ID" value="ABS32826.1"/>
    <property type="molecule type" value="Genomic_DNA"/>
</dbReference>
<dbReference type="RefSeq" id="WP_011948418.1">
    <property type="nucleotide sequence ID" value="NC_009697.1"/>
</dbReference>
<dbReference type="SMR" id="A7FRV4"/>
<dbReference type="GeneID" id="5184952"/>
<dbReference type="KEGG" id="cba:CLB_0736"/>
<dbReference type="HOGENOM" id="CLU_097408_2_2_9"/>
<dbReference type="GO" id="GO:0005737">
    <property type="term" value="C:cytoplasm"/>
    <property type="evidence" value="ECO:0007669"/>
    <property type="project" value="TreeGrafter"/>
</dbReference>
<dbReference type="GO" id="GO:0005960">
    <property type="term" value="C:glycine cleavage complex"/>
    <property type="evidence" value="ECO:0007669"/>
    <property type="project" value="InterPro"/>
</dbReference>
<dbReference type="GO" id="GO:0019464">
    <property type="term" value="P:glycine decarboxylation via glycine cleavage system"/>
    <property type="evidence" value="ECO:0007669"/>
    <property type="project" value="UniProtKB-UniRule"/>
</dbReference>
<dbReference type="CDD" id="cd06848">
    <property type="entry name" value="GCS_H"/>
    <property type="match status" value="1"/>
</dbReference>
<dbReference type="Gene3D" id="2.40.50.100">
    <property type="match status" value="1"/>
</dbReference>
<dbReference type="HAMAP" id="MF_00272">
    <property type="entry name" value="GcvH"/>
    <property type="match status" value="1"/>
</dbReference>
<dbReference type="InterPro" id="IPR003016">
    <property type="entry name" value="2-oxoA_DH_lipoyl-BS"/>
</dbReference>
<dbReference type="InterPro" id="IPR000089">
    <property type="entry name" value="Biotin_lipoyl"/>
</dbReference>
<dbReference type="InterPro" id="IPR002930">
    <property type="entry name" value="GCV_H"/>
</dbReference>
<dbReference type="InterPro" id="IPR033753">
    <property type="entry name" value="GCV_H/Fam206"/>
</dbReference>
<dbReference type="InterPro" id="IPR017453">
    <property type="entry name" value="GCV_H_sub"/>
</dbReference>
<dbReference type="InterPro" id="IPR011053">
    <property type="entry name" value="Single_hybrid_motif"/>
</dbReference>
<dbReference type="NCBIfam" id="TIGR00527">
    <property type="entry name" value="gcvH"/>
    <property type="match status" value="1"/>
</dbReference>
<dbReference type="NCBIfam" id="NF002270">
    <property type="entry name" value="PRK01202.1"/>
    <property type="match status" value="1"/>
</dbReference>
<dbReference type="PANTHER" id="PTHR11715">
    <property type="entry name" value="GLYCINE CLEAVAGE SYSTEM H PROTEIN"/>
    <property type="match status" value="1"/>
</dbReference>
<dbReference type="PANTHER" id="PTHR11715:SF3">
    <property type="entry name" value="GLYCINE CLEAVAGE SYSTEM H PROTEIN-RELATED"/>
    <property type="match status" value="1"/>
</dbReference>
<dbReference type="Pfam" id="PF01597">
    <property type="entry name" value="GCV_H"/>
    <property type="match status" value="1"/>
</dbReference>
<dbReference type="SUPFAM" id="SSF51230">
    <property type="entry name" value="Single hybrid motif"/>
    <property type="match status" value="1"/>
</dbReference>
<dbReference type="PROSITE" id="PS50968">
    <property type="entry name" value="BIOTINYL_LIPOYL"/>
    <property type="match status" value="1"/>
</dbReference>
<dbReference type="PROSITE" id="PS00189">
    <property type="entry name" value="LIPOYL"/>
    <property type="match status" value="1"/>
</dbReference>
<reference key="1">
    <citation type="journal article" date="2007" name="PLoS ONE">
        <title>Analysis of the neurotoxin complex genes in Clostridium botulinum A1-A4 and B1 strains: BoNT/A3, /Ba4 and /B1 clusters are located within plasmids.</title>
        <authorList>
            <person name="Smith T.J."/>
            <person name="Hill K.K."/>
            <person name="Foley B.T."/>
            <person name="Detter J.C."/>
            <person name="Munk A.C."/>
            <person name="Bruce D.C."/>
            <person name="Doggett N.A."/>
            <person name="Smith L.A."/>
            <person name="Marks J.D."/>
            <person name="Xie G."/>
            <person name="Brettin T.S."/>
        </authorList>
    </citation>
    <scope>NUCLEOTIDE SEQUENCE [LARGE SCALE GENOMIC DNA]</scope>
    <source>
        <strain>ATCC 19397 / Type A</strain>
    </source>
</reference>
<accession>A7FRV4</accession>
<proteinExistence type="inferred from homology"/>